<feature type="chain" id="PRO_0000202381" description="UPF0162 protein BU173">
    <location>
        <begin position="1"/>
        <end position="269"/>
    </location>
</feature>
<gene>
    <name type="ordered locus">BU173</name>
</gene>
<evidence type="ECO:0000305" key="1"/>
<accession>P57270</accession>
<comment type="similarity">
    <text evidence="1">Belongs to the UPF0162 family.</text>
</comment>
<name>Y173_BUCAI</name>
<sequence length="269" mass="30934">MNSLSNIDFSKLSLFESIIVASQAIREDFPSHSVLTELKNRIKEAESYISSENEPDRKLEKLLQLFYTQWNFGGASGVYKLSDTLWIDNVLKTRKGTAVSLGIIFLHIAQSLKLPLNPVVFPTQLILRADWINEKKWLINPFNGEILDQHTLEVWLKGNISPTAELYENDLYKSESITVIRKMLDTLKAALMEEKKMELALNVTNLLIKIDPNDPYEIRDRGLIYAQLECNHVALTDLIYFVEHCPEDPISEIIKIQIHSIEQKKTILH</sequence>
<keyword id="KW-1185">Reference proteome</keyword>
<proteinExistence type="inferred from homology"/>
<reference key="1">
    <citation type="journal article" date="2000" name="Nature">
        <title>Genome sequence of the endocellular bacterial symbiont of aphids Buchnera sp. APS.</title>
        <authorList>
            <person name="Shigenobu S."/>
            <person name="Watanabe H."/>
            <person name="Hattori M."/>
            <person name="Sakaki Y."/>
            <person name="Ishikawa H."/>
        </authorList>
    </citation>
    <scope>NUCLEOTIDE SEQUENCE [LARGE SCALE GENOMIC DNA]</scope>
    <source>
        <strain>APS</strain>
    </source>
</reference>
<organism>
    <name type="scientific">Buchnera aphidicola subsp. Acyrthosiphon pisum (strain APS)</name>
    <name type="common">Acyrthosiphon pisum symbiotic bacterium</name>
    <dbReference type="NCBI Taxonomy" id="107806"/>
    <lineage>
        <taxon>Bacteria</taxon>
        <taxon>Pseudomonadati</taxon>
        <taxon>Pseudomonadota</taxon>
        <taxon>Gammaproteobacteria</taxon>
        <taxon>Enterobacterales</taxon>
        <taxon>Erwiniaceae</taxon>
        <taxon>Buchnera</taxon>
    </lineage>
</organism>
<protein>
    <recommendedName>
        <fullName>UPF0162 protein BU173</fullName>
    </recommendedName>
</protein>
<dbReference type="EMBL" id="BA000003">
    <property type="protein sequence ID" value="BAB12890.1"/>
    <property type="molecule type" value="Genomic_DNA"/>
</dbReference>
<dbReference type="RefSeq" id="NP_240004.1">
    <property type="nucleotide sequence ID" value="NC_002528.1"/>
</dbReference>
<dbReference type="SMR" id="P57270"/>
<dbReference type="STRING" id="563178.BUAP5A_170"/>
<dbReference type="EnsemblBacteria" id="BAB12890">
    <property type="protein sequence ID" value="BAB12890"/>
    <property type="gene ID" value="BAB12890"/>
</dbReference>
<dbReference type="KEGG" id="buc:BU173"/>
<dbReference type="PATRIC" id="fig|107806.10.peg.184"/>
<dbReference type="eggNOG" id="COG2912">
    <property type="taxonomic scope" value="Bacteria"/>
</dbReference>
<dbReference type="HOGENOM" id="CLU_063810_0_0_6"/>
<dbReference type="BioCyc" id="BAPH107806:GBZJ-171-MONOMER"/>
<dbReference type="Proteomes" id="UP000001806">
    <property type="component" value="Chromosome"/>
</dbReference>
<dbReference type="InterPro" id="IPR032698">
    <property type="entry name" value="SirB1_N"/>
</dbReference>
<dbReference type="InterPro" id="IPR011990">
    <property type="entry name" value="TPR-like_helical_dom_sf"/>
</dbReference>
<dbReference type="NCBIfam" id="NF008188">
    <property type="entry name" value="PRK10941.1"/>
    <property type="match status" value="1"/>
</dbReference>
<dbReference type="PANTHER" id="PTHR31350:SF21">
    <property type="entry name" value="F-BOX ONLY PROTEIN 21"/>
    <property type="match status" value="1"/>
</dbReference>
<dbReference type="PANTHER" id="PTHR31350">
    <property type="entry name" value="SI:DKEY-261L7.2"/>
    <property type="match status" value="1"/>
</dbReference>
<dbReference type="Pfam" id="PF13371">
    <property type="entry name" value="TPR_9"/>
    <property type="match status" value="1"/>
</dbReference>
<dbReference type="Pfam" id="PF13369">
    <property type="entry name" value="Transglut_core2"/>
    <property type="match status" value="1"/>
</dbReference>
<dbReference type="SUPFAM" id="SSF48452">
    <property type="entry name" value="TPR-like"/>
    <property type="match status" value="1"/>
</dbReference>